<proteinExistence type="inferred from homology"/>
<dbReference type="EC" id="6.3.4.4" evidence="1"/>
<dbReference type="EMBL" id="CP000680">
    <property type="protein sequence ID" value="ABP83409.1"/>
    <property type="molecule type" value="Genomic_DNA"/>
</dbReference>
<dbReference type="SMR" id="A4XPZ3"/>
<dbReference type="STRING" id="399739.Pmen_0641"/>
<dbReference type="KEGG" id="pmy:Pmen_0641"/>
<dbReference type="PATRIC" id="fig|399739.8.peg.648"/>
<dbReference type="eggNOG" id="COG0104">
    <property type="taxonomic scope" value="Bacteria"/>
</dbReference>
<dbReference type="HOGENOM" id="CLU_029848_0_0_6"/>
<dbReference type="OrthoDB" id="9807553at2"/>
<dbReference type="UniPathway" id="UPA00075">
    <property type="reaction ID" value="UER00335"/>
</dbReference>
<dbReference type="GO" id="GO:0005737">
    <property type="term" value="C:cytoplasm"/>
    <property type="evidence" value="ECO:0007669"/>
    <property type="project" value="UniProtKB-SubCell"/>
</dbReference>
<dbReference type="GO" id="GO:0004019">
    <property type="term" value="F:adenylosuccinate synthase activity"/>
    <property type="evidence" value="ECO:0007669"/>
    <property type="project" value="UniProtKB-UniRule"/>
</dbReference>
<dbReference type="GO" id="GO:0005525">
    <property type="term" value="F:GTP binding"/>
    <property type="evidence" value="ECO:0007669"/>
    <property type="project" value="UniProtKB-UniRule"/>
</dbReference>
<dbReference type="GO" id="GO:0000287">
    <property type="term" value="F:magnesium ion binding"/>
    <property type="evidence" value="ECO:0007669"/>
    <property type="project" value="UniProtKB-UniRule"/>
</dbReference>
<dbReference type="GO" id="GO:0044208">
    <property type="term" value="P:'de novo' AMP biosynthetic process"/>
    <property type="evidence" value="ECO:0007669"/>
    <property type="project" value="UniProtKB-UniRule"/>
</dbReference>
<dbReference type="GO" id="GO:0046040">
    <property type="term" value="P:IMP metabolic process"/>
    <property type="evidence" value="ECO:0007669"/>
    <property type="project" value="TreeGrafter"/>
</dbReference>
<dbReference type="CDD" id="cd03108">
    <property type="entry name" value="AdSS"/>
    <property type="match status" value="1"/>
</dbReference>
<dbReference type="FunFam" id="1.10.300.10:FF:000001">
    <property type="entry name" value="Adenylosuccinate synthetase"/>
    <property type="match status" value="1"/>
</dbReference>
<dbReference type="FunFam" id="3.90.170.10:FF:000001">
    <property type="entry name" value="Adenylosuccinate synthetase"/>
    <property type="match status" value="1"/>
</dbReference>
<dbReference type="Gene3D" id="3.40.440.10">
    <property type="entry name" value="Adenylosuccinate Synthetase, subunit A, domain 1"/>
    <property type="match status" value="1"/>
</dbReference>
<dbReference type="Gene3D" id="1.10.300.10">
    <property type="entry name" value="Adenylosuccinate Synthetase, subunit A, domain 2"/>
    <property type="match status" value="1"/>
</dbReference>
<dbReference type="Gene3D" id="3.90.170.10">
    <property type="entry name" value="Adenylosuccinate Synthetase, subunit A, domain 3"/>
    <property type="match status" value="1"/>
</dbReference>
<dbReference type="HAMAP" id="MF_00011">
    <property type="entry name" value="Adenylosucc_synth"/>
    <property type="match status" value="1"/>
</dbReference>
<dbReference type="InterPro" id="IPR018220">
    <property type="entry name" value="Adenylosuccin_syn_GTP-bd"/>
</dbReference>
<dbReference type="InterPro" id="IPR033128">
    <property type="entry name" value="Adenylosuccin_syn_Lys_AS"/>
</dbReference>
<dbReference type="InterPro" id="IPR042109">
    <property type="entry name" value="Adenylosuccinate_synth_dom1"/>
</dbReference>
<dbReference type="InterPro" id="IPR042110">
    <property type="entry name" value="Adenylosuccinate_synth_dom2"/>
</dbReference>
<dbReference type="InterPro" id="IPR042111">
    <property type="entry name" value="Adenylosuccinate_synth_dom3"/>
</dbReference>
<dbReference type="InterPro" id="IPR001114">
    <property type="entry name" value="Adenylosuccinate_synthetase"/>
</dbReference>
<dbReference type="InterPro" id="IPR027417">
    <property type="entry name" value="P-loop_NTPase"/>
</dbReference>
<dbReference type="NCBIfam" id="NF002223">
    <property type="entry name" value="PRK01117.1"/>
    <property type="match status" value="1"/>
</dbReference>
<dbReference type="NCBIfam" id="TIGR00184">
    <property type="entry name" value="purA"/>
    <property type="match status" value="1"/>
</dbReference>
<dbReference type="PANTHER" id="PTHR11846">
    <property type="entry name" value="ADENYLOSUCCINATE SYNTHETASE"/>
    <property type="match status" value="1"/>
</dbReference>
<dbReference type="PANTHER" id="PTHR11846:SF0">
    <property type="entry name" value="ADENYLOSUCCINATE SYNTHETASE"/>
    <property type="match status" value="1"/>
</dbReference>
<dbReference type="Pfam" id="PF00709">
    <property type="entry name" value="Adenylsucc_synt"/>
    <property type="match status" value="1"/>
</dbReference>
<dbReference type="SMART" id="SM00788">
    <property type="entry name" value="Adenylsucc_synt"/>
    <property type="match status" value="1"/>
</dbReference>
<dbReference type="SUPFAM" id="SSF52540">
    <property type="entry name" value="P-loop containing nucleoside triphosphate hydrolases"/>
    <property type="match status" value="1"/>
</dbReference>
<dbReference type="PROSITE" id="PS01266">
    <property type="entry name" value="ADENYLOSUCCIN_SYN_1"/>
    <property type="match status" value="1"/>
</dbReference>
<dbReference type="PROSITE" id="PS00513">
    <property type="entry name" value="ADENYLOSUCCIN_SYN_2"/>
    <property type="match status" value="1"/>
</dbReference>
<gene>
    <name evidence="1" type="primary">purA</name>
    <name type="ordered locus">Pmen_0641</name>
</gene>
<sequence>MGKNVVVLGTQWGDEGKGKIVDLLTEQAAAVVRYQGGHNAGHTLVIDGEKTVLHLIPSGILREGVECLIGNGVVVAPDALLREITKLEEKGVPVRQRLRISPACPLILSYHVALDQAREKARGDAKIGTTGRGIGPAYEDKVARRGLRVGDLFHRERFAAKLGELLDYHNFQLVNFYKEPAIDFQKTLDECMEYAELLKPMMADVTAVLHDLRREGKDIMFEGAQGSLLDIDHGTYPYVTSSNTTAGGIATGSGFGPLYLNYILGITKAYTTRVGSGPFPTELFDDVGAFLAKRGHEFGATTGRARRCGWFDAVILRRAIEINSISGLCLTKLDVLDGLETIRICTGYKDANGQVLVDAPTDADSYLGLQPVYEEMPGWSESTLGAKTLEDLPAAARAYIKRVEELVGAPIDIISTGPDRNETIVLRHPFA</sequence>
<organism>
    <name type="scientific">Ectopseudomonas mendocina (strain ymp)</name>
    <name type="common">Pseudomonas mendocina</name>
    <dbReference type="NCBI Taxonomy" id="399739"/>
    <lineage>
        <taxon>Bacteria</taxon>
        <taxon>Pseudomonadati</taxon>
        <taxon>Pseudomonadota</taxon>
        <taxon>Gammaproteobacteria</taxon>
        <taxon>Pseudomonadales</taxon>
        <taxon>Pseudomonadaceae</taxon>
        <taxon>Ectopseudomonas</taxon>
    </lineage>
</organism>
<name>PURA_ECTM1</name>
<comment type="function">
    <text evidence="1">Plays an important role in the de novo pathway of purine nucleotide biosynthesis. Catalyzes the first committed step in the biosynthesis of AMP from IMP.</text>
</comment>
<comment type="catalytic activity">
    <reaction evidence="1">
        <text>IMP + L-aspartate + GTP = N(6)-(1,2-dicarboxyethyl)-AMP + GDP + phosphate + 2 H(+)</text>
        <dbReference type="Rhea" id="RHEA:15753"/>
        <dbReference type="ChEBI" id="CHEBI:15378"/>
        <dbReference type="ChEBI" id="CHEBI:29991"/>
        <dbReference type="ChEBI" id="CHEBI:37565"/>
        <dbReference type="ChEBI" id="CHEBI:43474"/>
        <dbReference type="ChEBI" id="CHEBI:57567"/>
        <dbReference type="ChEBI" id="CHEBI:58053"/>
        <dbReference type="ChEBI" id="CHEBI:58189"/>
        <dbReference type="EC" id="6.3.4.4"/>
    </reaction>
</comment>
<comment type="cofactor">
    <cofactor evidence="1">
        <name>Mg(2+)</name>
        <dbReference type="ChEBI" id="CHEBI:18420"/>
    </cofactor>
    <text evidence="1">Binds 1 Mg(2+) ion per subunit.</text>
</comment>
<comment type="pathway">
    <text evidence="1">Purine metabolism; AMP biosynthesis via de novo pathway; AMP from IMP: step 1/2.</text>
</comment>
<comment type="subunit">
    <text evidence="1">Homodimer.</text>
</comment>
<comment type="subcellular location">
    <subcellularLocation>
        <location evidence="1">Cytoplasm</location>
    </subcellularLocation>
</comment>
<comment type="similarity">
    <text evidence="1">Belongs to the adenylosuccinate synthetase family.</text>
</comment>
<feature type="chain" id="PRO_1000000897" description="Adenylosuccinate synthetase">
    <location>
        <begin position="1"/>
        <end position="431"/>
    </location>
</feature>
<feature type="active site" description="Proton acceptor" evidence="1">
    <location>
        <position position="14"/>
    </location>
</feature>
<feature type="active site" description="Proton donor" evidence="1">
    <location>
        <position position="42"/>
    </location>
</feature>
<feature type="binding site" evidence="1">
    <location>
        <begin position="13"/>
        <end position="19"/>
    </location>
    <ligand>
        <name>GTP</name>
        <dbReference type="ChEBI" id="CHEBI:37565"/>
    </ligand>
</feature>
<feature type="binding site" description="in other chain" evidence="1">
    <location>
        <begin position="14"/>
        <end position="17"/>
    </location>
    <ligand>
        <name>IMP</name>
        <dbReference type="ChEBI" id="CHEBI:58053"/>
        <note>ligand shared between dimeric partners</note>
    </ligand>
</feature>
<feature type="binding site" evidence="1">
    <location>
        <position position="14"/>
    </location>
    <ligand>
        <name>Mg(2+)</name>
        <dbReference type="ChEBI" id="CHEBI:18420"/>
    </ligand>
</feature>
<feature type="binding site" description="in other chain" evidence="1">
    <location>
        <begin position="39"/>
        <end position="42"/>
    </location>
    <ligand>
        <name>IMP</name>
        <dbReference type="ChEBI" id="CHEBI:58053"/>
        <note>ligand shared between dimeric partners</note>
    </ligand>
</feature>
<feature type="binding site" evidence="1">
    <location>
        <begin position="41"/>
        <end position="43"/>
    </location>
    <ligand>
        <name>GTP</name>
        <dbReference type="ChEBI" id="CHEBI:37565"/>
    </ligand>
</feature>
<feature type="binding site" evidence="1">
    <location>
        <position position="41"/>
    </location>
    <ligand>
        <name>Mg(2+)</name>
        <dbReference type="ChEBI" id="CHEBI:18420"/>
    </ligand>
</feature>
<feature type="binding site" description="in other chain" evidence="1">
    <location>
        <position position="130"/>
    </location>
    <ligand>
        <name>IMP</name>
        <dbReference type="ChEBI" id="CHEBI:58053"/>
        <note>ligand shared between dimeric partners</note>
    </ligand>
</feature>
<feature type="binding site" evidence="1">
    <location>
        <position position="144"/>
    </location>
    <ligand>
        <name>IMP</name>
        <dbReference type="ChEBI" id="CHEBI:58053"/>
        <note>ligand shared between dimeric partners</note>
    </ligand>
</feature>
<feature type="binding site" description="in other chain" evidence="1">
    <location>
        <position position="225"/>
    </location>
    <ligand>
        <name>IMP</name>
        <dbReference type="ChEBI" id="CHEBI:58053"/>
        <note>ligand shared between dimeric partners</note>
    </ligand>
</feature>
<feature type="binding site" description="in other chain" evidence="1">
    <location>
        <position position="240"/>
    </location>
    <ligand>
        <name>IMP</name>
        <dbReference type="ChEBI" id="CHEBI:58053"/>
        <note>ligand shared between dimeric partners</note>
    </ligand>
</feature>
<feature type="binding site" evidence="1">
    <location>
        <begin position="300"/>
        <end position="306"/>
    </location>
    <ligand>
        <name>substrate</name>
    </ligand>
</feature>
<feature type="binding site" description="in other chain" evidence="1">
    <location>
        <position position="304"/>
    </location>
    <ligand>
        <name>IMP</name>
        <dbReference type="ChEBI" id="CHEBI:58053"/>
        <note>ligand shared between dimeric partners</note>
    </ligand>
</feature>
<feature type="binding site" evidence="1">
    <location>
        <position position="306"/>
    </location>
    <ligand>
        <name>GTP</name>
        <dbReference type="ChEBI" id="CHEBI:37565"/>
    </ligand>
</feature>
<feature type="binding site" evidence="1">
    <location>
        <begin position="332"/>
        <end position="334"/>
    </location>
    <ligand>
        <name>GTP</name>
        <dbReference type="ChEBI" id="CHEBI:37565"/>
    </ligand>
</feature>
<feature type="binding site" evidence="1">
    <location>
        <begin position="415"/>
        <end position="417"/>
    </location>
    <ligand>
        <name>GTP</name>
        <dbReference type="ChEBI" id="CHEBI:37565"/>
    </ligand>
</feature>
<evidence type="ECO:0000255" key="1">
    <source>
        <dbReference type="HAMAP-Rule" id="MF_00011"/>
    </source>
</evidence>
<protein>
    <recommendedName>
        <fullName evidence="1">Adenylosuccinate synthetase</fullName>
        <shortName evidence="1">AMPSase</shortName>
        <shortName evidence="1">AdSS</shortName>
        <ecNumber evidence="1">6.3.4.4</ecNumber>
    </recommendedName>
    <alternativeName>
        <fullName evidence="1">IMP--aspartate ligase</fullName>
    </alternativeName>
</protein>
<accession>A4XPZ3</accession>
<reference key="1">
    <citation type="submission" date="2007-04" db="EMBL/GenBank/DDBJ databases">
        <title>Complete sequence of Pseudomonas mendocina ymp.</title>
        <authorList>
            <consortium name="US DOE Joint Genome Institute"/>
            <person name="Copeland A."/>
            <person name="Lucas S."/>
            <person name="Lapidus A."/>
            <person name="Barry K."/>
            <person name="Glavina del Rio T."/>
            <person name="Dalin E."/>
            <person name="Tice H."/>
            <person name="Pitluck S."/>
            <person name="Kiss H."/>
            <person name="Brettin T."/>
            <person name="Detter J.C."/>
            <person name="Bruce D."/>
            <person name="Han C."/>
            <person name="Schmutz J."/>
            <person name="Larimer F."/>
            <person name="Land M."/>
            <person name="Hauser L."/>
            <person name="Kyrpides N."/>
            <person name="Mikhailova N."/>
            <person name="Hersman L."/>
            <person name="Dubois J."/>
            <person name="Maurice P."/>
            <person name="Richardson P."/>
        </authorList>
    </citation>
    <scope>NUCLEOTIDE SEQUENCE [LARGE SCALE GENOMIC DNA]</scope>
    <source>
        <strain>ymp</strain>
    </source>
</reference>
<keyword id="KW-0963">Cytoplasm</keyword>
<keyword id="KW-0342">GTP-binding</keyword>
<keyword id="KW-0436">Ligase</keyword>
<keyword id="KW-0460">Magnesium</keyword>
<keyword id="KW-0479">Metal-binding</keyword>
<keyword id="KW-0547">Nucleotide-binding</keyword>
<keyword id="KW-0658">Purine biosynthesis</keyword>